<keyword id="KW-1005">Bacterial flagellum biogenesis</keyword>
<keyword id="KW-0143">Chaperone</keyword>
<keyword id="KW-0963">Cytoplasm</keyword>
<keyword id="KW-0810">Translation regulation</keyword>
<proteinExistence type="inferred from homology"/>
<accession>Q2RKH2</accession>
<evidence type="ECO:0000255" key="1">
    <source>
        <dbReference type="HAMAP-Rule" id="MF_01185"/>
    </source>
</evidence>
<gene>
    <name evidence="1" type="primary">fliW</name>
    <name type="ordered locus">Moth_0749</name>
</gene>
<comment type="function">
    <text evidence="1">Acts as an anti-CsrA protein, binds CsrA and prevents it from repressing translation of its target genes, one of which is flagellin. Binds to flagellin and participates in the assembly of the flagellum.</text>
</comment>
<comment type="subunit">
    <text evidence="1">Interacts with translational regulator CsrA and flagellin(s).</text>
</comment>
<comment type="subcellular location">
    <subcellularLocation>
        <location evidence="1">Cytoplasm</location>
    </subcellularLocation>
</comment>
<comment type="similarity">
    <text evidence="1">Belongs to the FliW family.</text>
</comment>
<sequence length="158" mass="17538">MQVMTSRFGTLEINPSDLLHFPQGIPAFEHLKEFFFYPIPENPAFTWLQAAADPEVAFLLVDPFLFFPGYAVDLPARLQEELAIKDPADALVYAVVTIPDGDIRRATANLVGPIIINPTVRLGMQLILEGTKYTTRHQLFKESFSDDESIPSSGGNEG</sequence>
<protein>
    <recommendedName>
        <fullName evidence="1">Flagellar assembly factor FliW</fullName>
    </recommendedName>
</protein>
<dbReference type="EMBL" id="CP000232">
    <property type="protein sequence ID" value="ABC19067.1"/>
    <property type="molecule type" value="Genomic_DNA"/>
</dbReference>
<dbReference type="RefSeq" id="YP_429610.1">
    <property type="nucleotide sequence ID" value="NC_007644.1"/>
</dbReference>
<dbReference type="SMR" id="Q2RKH2"/>
<dbReference type="STRING" id="264732.Moth_0749"/>
<dbReference type="EnsemblBacteria" id="ABC19067">
    <property type="protein sequence ID" value="ABC19067"/>
    <property type="gene ID" value="Moth_0749"/>
</dbReference>
<dbReference type="KEGG" id="mta:Moth_0749"/>
<dbReference type="PATRIC" id="fig|264732.11.peg.806"/>
<dbReference type="eggNOG" id="COG1699">
    <property type="taxonomic scope" value="Bacteria"/>
</dbReference>
<dbReference type="HOGENOM" id="CLU_112356_0_2_9"/>
<dbReference type="OrthoDB" id="9801235at2"/>
<dbReference type="GO" id="GO:0005737">
    <property type="term" value="C:cytoplasm"/>
    <property type="evidence" value="ECO:0007669"/>
    <property type="project" value="UniProtKB-SubCell"/>
</dbReference>
<dbReference type="GO" id="GO:0044780">
    <property type="term" value="P:bacterial-type flagellum assembly"/>
    <property type="evidence" value="ECO:0007669"/>
    <property type="project" value="UniProtKB-UniRule"/>
</dbReference>
<dbReference type="GO" id="GO:0006417">
    <property type="term" value="P:regulation of translation"/>
    <property type="evidence" value="ECO:0007669"/>
    <property type="project" value="UniProtKB-KW"/>
</dbReference>
<dbReference type="Gene3D" id="2.30.290.10">
    <property type="entry name" value="BH3618-like"/>
    <property type="match status" value="1"/>
</dbReference>
<dbReference type="HAMAP" id="MF_01185">
    <property type="entry name" value="FliW"/>
    <property type="match status" value="1"/>
</dbReference>
<dbReference type="InterPro" id="IPR003775">
    <property type="entry name" value="Flagellar_assembly_factor_FliW"/>
</dbReference>
<dbReference type="InterPro" id="IPR024046">
    <property type="entry name" value="Flagellar_assmbl_FliW_dom_sf"/>
</dbReference>
<dbReference type="NCBIfam" id="NF009793">
    <property type="entry name" value="PRK13285.1-1"/>
    <property type="match status" value="1"/>
</dbReference>
<dbReference type="PANTHER" id="PTHR39190">
    <property type="entry name" value="FLAGELLAR ASSEMBLY FACTOR FLIW"/>
    <property type="match status" value="1"/>
</dbReference>
<dbReference type="PANTHER" id="PTHR39190:SF1">
    <property type="entry name" value="FLAGELLAR ASSEMBLY FACTOR FLIW"/>
    <property type="match status" value="1"/>
</dbReference>
<dbReference type="Pfam" id="PF02623">
    <property type="entry name" value="FliW"/>
    <property type="match status" value="1"/>
</dbReference>
<dbReference type="SUPFAM" id="SSF141457">
    <property type="entry name" value="BH3618-like"/>
    <property type="match status" value="1"/>
</dbReference>
<name>FLIW_MOOTA</name>
<feature type="chain" id="PRO_0000273003" description="Flagellar assembly factor FliW">
    <location>
        <begin position="1"/>
        <end position="158"/>
    </location>
</feature>
<organism>
    <name type="scientific">Moorella thermoacetica (strain ATCC 39073 / JCM 9320)</name>
    <dbReference type="NCBI Taxonomy" id="264732"/>
    <lineage>
        <taxon>Bacteria</taxon>
        <taxon>Bacillati</taxon>
        <taxon>Bacillota</taxon>
        <taxon>Clostridia</taxon>
        <taxon>Moorellales</taxon>
        <taxon>Moorellaceae</taxon>
        <taxon>Moorella</taxon>
    </lineage>
</organism>
<reference key="1">
    <citation type="journal article" date="2008" name="Environ. Microbiol.">
        <title>The complete genome sequence of Moorella thermoacetica (f. Clostridium thermoaceticum).</title>
        <authorList>
            <person name="Pierce E."/>
            <person name="Xie G."/>
            <person name="Barabote R.D."/>
            <person name="Saunders E."/>
            <person name="Han C.S."/>
            <person name="Detter J.C."/>
            <person name="Richardson P."/>
            <person name="Brettin T.S."/>
            <person name="Das A."/>
            <person name="Ljungdahl L.G."/>
            <person name="Ragsdale S.W."/>
        </authorList>
    </citation>
    <scope>NUCLEOTIDE SEQUENCE [LARGE SCALE GENOMIC DNA]</scope>
    <source>
        <strain>ATCC 39073 / JCM 9320</strain>
    </source>
</reference>